<comment type="function">
    <molecule>Botulinum neurotoxin type B</molecule>
    <text evidence="6 9 11 12 13 14 18 20 21 23 25 26">Botulinum toxin causes flaccid paralysis by inhibiting neurotransmitter (acetylcholine) release from the presynaptic membranes of nerve terminals of the eukaryotic host skeletal and autonomic nervous system, with frequent heart or respiratory failure. Precursor of botulinum neurotoxin B which has 2 coreceptors; complex polysialylated gangliosides found on neural tissue and specific membrane-anchored proteins found in synaptic vesicles (PubMed:17167418, PubMed:17167421, PubMed:17185412, PubMed:23807078). Receptor proteins are exposed on host presynaptic cell membrane during neurotransmitter release, when the toxin heavy chain (HC) binds to them (PubMed:14504267). Upon synaptic vesicle recycling the toxin is taken up via the endocytic pathway (PubMed:14504267). When the pH of the toxin-containing endosome drops a structural rearrangement occurs so that the N-terminus of the HC forms pores that allows the light chain (LC) to translocate into the cytosol (PubMed:3856850). Once in the cytosol the disulfide bond linking the 2 subunits is reduced and LC cleaves its target protein on synaptic vesicles, preventing their fusion with the cytoplasmic membrane and thus neurotransmitter release. Binds to host peripheral neuronal presynaptic membranes via synaptotagmins 1 and 2 (SYT1 and SYT2) (PubMed:14504267, PubMed:8144634). Toxin binds to the membrane proximal extra-cytoplasmic region of host SYT1 and SYT2 that is transiently exposed outside of cells during exocytosis; exogenous gangliosides enhance binding and subsequent uptake of toxin into host cells (PubMed:14504267, PubMed:15123599). Toxin uptake into neural cells requires stimulation (incubation with K(+) to stimulate SYT protein receptor exposure); subsequently the toxin colocalizes with its receptor in host cells with a concomitant decrease in target protein (synaptobrevin-2/VAMP2) immunoreactivity (PubMed:14504267). Toxin uptake can be blocked by the appropriate synaptotagmin protein fragments and gangliosides in cell culture and in mice (PubMed:14504267, PubMed:15123599). BoNT/B is a 'coincidence detector'; it requires simultaneous binding to coreceptor GT1b and low pH to transform into a membrane-bound, oligomeric channel (PubMed:21925111, PubMed:22720883). Whole toxin only has protease activity after reduction which releases LC (PubMed:1331807, PubMed:7803399).</text>
</comment>
<comment type="function">
    <molecule>Botulinum neurotoxin B light chain</molecule>
    <text evidence="6 38">Has proteolytic activity (PubMed:1331807). After translocation into the eukaryotic host cytosol, inhibits neurotransmitter release by acting as a zinc endopeptidase that cleaves the '76-Gln-|-Phe-77' bond of synaptobrevin-2/VAMP2, blocking neurotransmitter release (PubMed:1331807, PubMed:7803399). In vitro the LC only has protease activity after reduction (PubMed:1331807, PubMed:7803399).</text>
</comment>
<comment type="function">
    <molecule>Botulinum neurotoxin B heavy chain</molecule>
    <text evidence="3 5 9 10 11 12 13 14 17 21 26 35 37">Responsible for host epithelial cell transcytosis, host nerve cell targeting and translocation of light chain (LC) into host cytosol. Composed of 3 subdomains; the translocation domain (TD), and N-terminus and C-terminus of the receptor-binding domain (RBD). The N-terminus of the TD wraps an extended belt around the perimeter of the LC; it does not seem to protect the active site, but might prevent premature LC dissociation from the translocation channel and protect toxin prior to translocation (PubMed:10932256, PubMed:17167418). Has 2 coreceptors; complex gangliosides found primarily on neural tissue and host synaptotagmin-1 and -2 (SYT1 and SYT2) which bind simultaneously to adjacent but separate sites at the tip of the HC (PubMed:17167418, PubMed:17167421, PubMed:17185412, PubMed:23807078, PubMed:8144634). HC alone partially prevents uptake of whole toxin by neural cells, and delays paralysis onset by 160% (PubMed:10413679). Binding probably positions the TD for integration into the synaptic vesicle membrane (PubMed:17167418, PubMed:23807078). The HC forms channels at low pH that mediate transport of the light chain (LC) from the endocytic vesicle to the cytosol (PubMed:3856850). Binds gangliosides GD1b and GT1b (PubMed:10413679, PubMed:14731268). Gangliosides are not only a coreceptor, but also required for uptake into nerve cells (PubMed:17167418, PubMed:21925111). HC alone binds to host receptor proteins SYT1 and SYT2 (PubMed:14504267, PubMed:15123599, PubMed:17185412, PubMed:19650874). Interaction with SYT1 protein does not require SYT1 glycosylation (PubMed:19476346). The HC C-terminus (approximately residues 1079-1291) interacts with host SYT2 (PubMed:15123599, PubMed:17167418, PubMed:17167421, PubMed:23807078). Has higher affinity for SYT2 than SYT1 (PubMed:17167421, PubMed:17185412). Significantly decreases uptake and toxicity of whole BoNT/B and BoNT/G (PubMed:19650874).</text>
</comment>
<comment type="catalytic activity">
    <reaction evidence="6">
        <text>Limited hydrolysis of proteins of the neuroexocytosis apparatus, synaptobrevins, SNAP25 or syntaxin. No detected action on small molecule substrates.</text>
        <dbReference type="EC" id="3.4.24.69"/>
    </reaction>
</comment>
<comment type="cofactor">
    <cofactor evidence="5 7 12">
        <name>Zn(2+)</name>
        <dbReference type="ChEBI" id="CHEBI:29105"/>
    </cofactor>
    <text evidence="5 7 12">Binds 1 zinc ion per subunit, to the LC (PubMed:10932256, PubMed:1429690, PubMed:17167418).</text>
</comment>
<comment type="activity regulation">
    <text evidence="6 18">Proteolysis inhibited by EDTA and captopril, and by peptides that encompass the VAMP2 cleavage site (Ala-Ser-Gln-Phe-Glu-Thr-Ser and Gln-Phe-Glu-Thr) (PubMed:1331807). Translocation of whole toxin into neurons is inhibited by toosendanin (PubMed:21925111).</text>
</comment>
<comment type="biophysicochemical properties">
    <kinetics>
        <KM evidence="19">19.2 uM for over-expressed human VAMP1</KM>
        <KM evidence="19">29.9 uM for over-expressed human VAMP2</KM>
        <KM evidence="19">11.6 uM for over-expressed human VAMP3</KM>
        <text evidence="19">kcat is 3.96, 4.68 and 3.50 sec(-1) for over-expressed human VAMP1, VAMP2 and VAMP3 respectively.</text>
    </kinetics>
</comment>
<comment type="subunit">
    <text evidence="6 9 11 12 13 15 17 18 20 21 22 26">Heterodimer; disulfide-linked heterodimer of a light chain (LC) and a heavy chain (HC) (PubMed:1331807, PubMed:3139097). At pH 4.4 in the presence of ganglioside GT1b may form trimers (PubMed:21925111, PubMed:22720883). Interacts with host receptor synaptotagmin-1 (SYT1); interaction is improved in the presence of gangliosides (PubMed:14504267, PubMed:19650874, PubMed:8144634). Interacts with host receptor synaptotagmin-2 (SYT2) (PubMed:14504267, PubMed:15123599, PubMed:17167418, PubMed:17167421, PubMed:19650874, PubMed:23807078). SYT2 interaction and toxin uptake do not require gangliosides but are improved in their presence (PubMed:14504267, PubMed:15123599). HC interacts with a complex including at least host synaptic vesicle glycoprotein 2 (SV2) and synaptotagmin-1 (SYT1); copurification does not depend on glycosylation of either protein (PubMed:19476346).</text>
</comment>
<comment type="interaction">
    <interactant intactId="EBI-7661991">
        <id>P10844</id>
    </interactant>
    <interactant intactId="EBI-458017">
        <id>P29101</id>
        <label>Syt2</label>
    </interactant>
    <organismsDiffer>true</organismsDiffer>
    <experiments>6</experiments>
</comment>
<comment type="interaction">
    <interactant intactId="EBI-7661991">
        <id>P10844</id>
    </interactant>
    <interactant intactId="EBI-457969">
        <id>P46097</id>
        <label>Syt2</label>
    </interactant>
    <organismsDiffer>true</organismsDiffer>
    <experiments>3</experiments>
</comment>
<comment type="subcellular location">
    <molecule>Botulinum neurotoxin type B</molecule>
    <subcellularLocation>
        <location evidence="22">Secreted</location>
    </subcellularLocation>
    <subcellularLocation>
        <location evidence="9">Host synapse</location>
        <location evidence="9">Host presynaptic cell membrane</location>
    </subcellularLocation>
    <text evidence="9 18">Colocalizes with its SYT1 receptor, probably in synaptic vesicles (PubMed:14504267). At pH 4.4 in the presence of ganglioside GT1b becomes a membrane-associated hydrophobic protein (PubMed:21925111).</text>
</comment>
<comment type="subcellular location">
    <molecule>Botulinum neurotoxin B light chain</molecule>
    <subcellularLocation>
        <location evidence="22">Secreted</location>
    </subcellularLocation>
    <subcellularLocation>
        <location evidence="30 39">Host cytoplasm</location>
        <location evidence="30 39">Host cytosol</location>
    </subcellularLocation>
</comment>
<comment type="subcellular location">
    <molecule>Botulinum neurotoxin B heavy chain</molecule>
    <subcellularLocation>
        <location evidence="22">Secreted</location>
    </subcellularLocation>
    <subcellularLocation>
        <location evidence="9">Host synapse</location>
        <location evidence="9">Host presynaptic cell membrane</location>
    </subcellularLocation>
    <subcellularLocation>
        <location evidence="35">Host cytoplasmic vesicle</location>
        <location evidence="35">Host secretory vesicle</location>
        <location evidence="35">Host synaptic vesicle membrane</location>
        <topology evidence="28">Multi-pass membrane protein</topology>
    </subcellularLocation>
</comment>
<comment type="domain">
    <molecule>Botulinum neurotoxin B light chain</molecule>
    <text evidence="6">Has protease activity (PubMed:1331807).</text>
</comment>
<comment type="domain">
    <molecule>Botulinum neurotoxin B heavy chain</molecule>
    <text evidence="5 23 34">Has 3 functional domains; the translocation domain (TD) and the receptor-binding domain (RBD) which is further subdivided into N- and C-terminal domains (N-RBD and C-RBD) (PubMed:10932256). HC forms channels in bilayers at low pH (PubMed:3856850). The N-terminal belt of the TD wraps an extended belt around the perimeter of the LC; it is shorter than in BoNT/A and does not block the active site (PubMed:10932256). The belt may be a pseudosubstrate inhibitor which serves as an intramolecular chaperone for the LC prior to its translocation into the host cytosol (PubMed:17907800).</text>
</comment>
<comment type="pharmaceutical">
    <text>Available under the name MYOBLOC (rimabotulinumtoxinB, US WorldMeds, LLC) for the treatment of adults with cervical dystonia.</text>
</comment>
<comment type="miscellaneous">
    <text>There are seven antigenically distinct forms of botulinum neurotoxin: Types A, B, C, D, E, F, and G; new subtypes are quite frequent.</text>
</comment>
<comment type="miscellaneous">
    <text evidence="1">Botulism poisoning is usually food-borne, either by ingesting toxin or bacterial-contaminated food, or less frequently by inhalation poisoning. In both cases the neurotoxin binds to the apical surface of epithelial cells in the gut or airway. Toxin undergoes receptor-mediated endocytosis (using a different receptor than on target nerve cells), transcytosis across the epithelial cells and release into the general circulation. Once in the general circulation it binds to its target cells.</text>
</comment>
<comment type="miscellaneous">
    <text evidence="8">Types A, B and E are the most frequent cause of adult human foodborne botulism; type A is the most severe, while type E has the shortest incubation period (PubMed:1431246).</text>
</comment>
<comment type="miscellaneous">
    <text evidence="24">Neurotoxin type B is released from bacteria mostly as a single chain and cleaved by host proteases into the active dichain (PubMed:4030755).</text>
</comment>
<comment type="similarity">
    <text evidence="28">Belongs to the peptidase M27 family.</text>
</comment>
<comment type="caution">
    <text evidence="4 16">A structure of a fragment of this protein in complex with the catalytic domain of C.botulinum neurotoxin type B (BoNT/B, botB) was reported; because of the lack of clear and continuous electron density for the VAMP2 peptide in the complex structure, the paper was retracted. One of its associated structures remains valid (PDB:1F82, light chain alone) (PubMed:10932255, PubMed:19578378).</text>
</comment>
<comment type="online information" name="BotDB - A Database Resource for Clostridial Neurotoxins">
    <link uri="https://botdb.abcc.ncifcrf.gov/"/>
</comment>
<feature type="initiator methionine" description="Removed" evidence="22">
    <location>
        <position position="1"/>
    </location>
</feature>
<feature type="chain" id="PRO_0000444904" description="Botulinum neurotoxin type B">
    <location>
        <begin position="2"/>
        <end position="1291"/>
    </location>
</feature>
<feature type="chain" id="PRO_0000029215" description="Botulinum neurotoxin B light chain">
    <location>
        <begin position="2"/>
        <end position="441"/>
    </location>
</feature>
<feature type="chain" id="PRO_0000029216" description="Botulinum neurotoxin B heavy chain">
    <location>
        <begin position="442"/>
        <end position="1291"/>
    </location>
</feature>
<feature type="region of interest" description="Translocation domain (TD)" evidence="1">
    <location>
        <begin position="442"/>
        <end position="857"/>
    </location>
</feature>
<feature type="region of interest" description="Belt; not required for channel formation" evidence="29">
    <location>
        <begin position="481"/>
        <end position="532"/>
    </location>
</feature>
<feature type="region of interest" description="N-terminus of receptor binding domain (N-RBD)" evidence="1">
    <location>
        <begin position="858"/>
        <end position="1079"/>
    </location>
</feature>
<feature type="region of interest" description="C-terminus of receptor binding domain (C-RBD)" evidence="1">
    <location>
        <begin position="1080"/>
        <end position="1291"/>
    </location>
</feature>
<feature type="short sequence motif" description="Host ganglioside-binding motif" evidence="5 32 33">
    <location>
        <begin position="1260"/>
        <end position="1263"/>
    </location>
</feature>
<feature type="active site" evidence="2">
    <location>
        <position position="231"/>
    </location>
</feature>
<feature type="binding site" evidence="2 5 31 40 41 43">
    <location>
        <position position="230"/>
    </location>
    <ligand>
        <name>Zn(2+)</name>
        <dbReference type="ChEBI" id="CHEBI:29105"/>
        <note>catalytic</note>
    </ligand>
</feature>
<feature type="binding site" evidence="2 5 31 40 41 43">
    <location>
        <position position="234"/>
    </location>
    <ligand>
        <name>Zn(2+)</name>
        <dbReference type="ChEBI" id="CHEBI:29105"/>
        <note>catalytic</note>
    </ligand>
</feature>
<feature type="binding site" evidence="5 40 41 43">
    <location>
        <position position="268"/>
    </location>
    <ligand>
        <name>Zn(2+)</name>
        <dbReference type="ChEBI" id="CHEBI:29105"/>
        <note>catalytic</note>
    </ligand>
</feature>
<feature type="binding site" evidence="44">
    <location>
        <position position="1025"/>
    </location>
    <ligand>
        <name>a ganglioside GT1b (d18:1(4E))</name>
        <dbReference type="ChEBI" id="CHEBI:78452"/>
        <note>host ganglioside</note>
    </ligand>
</feature>
<feature type="binding site" evidence="5 32 44">
    <location>
        <begin position="1189"/>
        <end position="1190"/>
    </location>
    <ligand>
        <name>a ganglioside GT1b (d18:1(4E))</name>
        <dbReference type="ChEBI" id="CHEBI:78452"/>
        <note>host ganglioside</note>
    </ligand>
</feature>
<feature type="binding site" evidence="5 32 44">
    <location>
        <begin position="1240"/>
        <end position="1241"/>
    </location>
    <ligand>
        <name>D-galactose</name>
        <dbReference type="ChEBI" id="CHEBI:4139"/>
    </ligand>
</feature>
<feature type="disulfide bond" description="Interchain (between light and heavy chains)" evidence="5 12 36 40 41 43">
    <location>
        <begin position="437"/>
        <end position="446"/>
    </location>
</feature>
<feature type="mutagenesis site" description="Greatly decreased binding of heavy chain (HC) to host SYT2, whole toxin about 200-fold less toxic. Significantly decreased binding of HC to host SYT1 and SYT2 independent of gangliosides; whole toxin about 100-fold less toxic." evidence="13 14">
    <original>V</original>
    <variation>D</variation>
    <location>
        <position position="1118"/>
    </location>
</feature>
<feature type="mutagenesis site" description="Significantly decreased binding of heavy chain to host SYT1 and SYT2 independent of gangliosides." evidence="14">
    <original>Y</original>
    <variation>R</variation>
    <location>
        <position position="1183"/>
    </location>
</feature>
<feature type="mutagenesis site" description="Decreased toxicity, heavy chain has decreased binding to synaptosomes and to GT1b." evidence="10">
    <original>E</original>
    <variation>L</variation>
    <location>
        <position position="1189"/>
    </location>
</feature>
<feature type="mutagenesis site" description="Greatly decreased toxicity, heavy chain has decreased binding to synaptosomes, binds less GT1b." evidence="10">
    <original>E</original>
    <variation>L</variation>
    <location>
        <position position="1190"/>
    </location>
</feature>
<feature type="mutagenesis site" description="Increased binding of heavy chain to host SYT1, no effect on binding to SYT2 independent of gangliosides." evidence="14">
    <original>E</original>
    <variation>L</variation>
    <location>
        <position position="1191"/>
    </location>
</feature>
<feature type="mutagenesis site" description="Greatly decreased binding of heavy chain to host SYT2, whole toxin about dramatically less toxic. Significantly decreased binding of heavy chain to host SYT1 and SYT2 independent of gangliosides; whole toxin significantly less toxic. Essentially non-toxic; when associated with L-1262. Heavy chain no longer inhibits whole-toxin uptake and toxicity." evidence="13 14 17">
    <original>K</original>
    <variation>E</variation>
    <location>
        <position position="1192"/>
    </location>
</feature>
<feature type="mutagenesis site" description="Decreased binding of heavy chain to host SYT1 and SYT2 independent of gangliosides." evidence="14">
    <original>K</original>
    <variation>M</variation>
    <variation>Y</variation>
    <location>
        <position position="1192"/>
    </location>
</feature>
<feature type="mutagenesis site" description="Greatly decreased binding of heavy chain to host SYT2, whole toxin about 40-fold less toxic." evidence="13">
    <original>F</original>
    <variation>A</variation>
    <location>
        <position position="1194"/>
    </location>
</feature>
<feature type="mutagenesis site" description="Greatly decreased binding of heavy chain to host SYT2, whole toxin about 1000-fold less toxic." evidence="13">
    <original>A</original>
    <variation>K</variation>
    <location>
        <position position="1196"/>
    </location>
</feature>
<feature type="mutagenesis site" description="Increased binding of heavy chain to host SYT2, no effect on toxicity." evidence="13">
    <original>S</original>
    <variation>Y</variation>
    <location>
        <position position="1199"/>
    </location>
</feature>
<feature type="mutagenesis site" description="Greatly decreased binding of heavy chain to host SYT2, whole toxin about 30-fold less toxic." evidence="13">
    <original>F</original>
    <variation>A</variation>
    <location>
        <position position="1204"/>
    </location>
</feature>
<feature type="mutagenesis site" description="Decreased toxicity, heavy chain has decreased binding to synaptosomes and to GT1b." evidence="10">
    <original>H</original>
    <variation>A</variation>
    <location>
        <position position="1241"/>
    </location>
</feature>
<feature type="mutagenesis site" description="Greatly decreased toxicity, heavy chain has decreased binding to synaptosomes and dramatic decrease in GT1b binding." evidence="10">
    <original>H</original>
    <variation>W</variation>
    <location>
        <position position="1241"/>
    </location>
</feature>
<feature type="mutagenesis site" description="Greatly decreased toxicity, heavy chain has decreased binding to synaptosome and binds less GT1b." evidence="10">
    <original>S</original>
    <variation>A</variation>
    <location>
        <position position="1260"/>
    </location>
</feature>
<feature type="mutagenesis site" description="Greatly decreased toxicity, heavy chain has decreased binding to synaptosomes, heavy chain has dramatic decrease in GT1b binding. Gangliosides no longer increase heavy chain affinity for SYT1 or SYT2; whole toxin significantly less toxic. Essentially non-toxic; when associated with E-1192. Heavy chain no longer inhibits whole-toxin uptake and toxicity. In mice without complex gangliosides no change compared to wild-type protein." evidence="10 14 17">
    <original>W</original>
    <variation>L</variation>
    <location>
        <position position="1262"/>
    </location>
</feature>
<feature type="mutagenesis site" description="Greatly decreased toxicity, heavy chain has intermediate binding to synaptosomes, binds less GT1b." evidence="10">
    <original>Y</original>
    <variation>F</variation>
    <location>
        <position position="1263"/>
    </location>
</feature>
<feature type="mutagenesis site" description="Greatly decreased toxicity, heavy chain has decreased binding to synaptosomes and dramatic decrease in GT1b binding." evidence="10">
    <original>Y</original>
    <variation>S</variation>
    <location>
        <position position="1263"/>
    </location>
</feature>
<feature type="sequence conflict" description="In Ref. 4; AA sequence." evidence="28" ref="4">
    <original>T</original>
    <variation>M</variation>
    <location>
        <position position="30"/>
    </location>
</feature>
<feature type="sequence conflict" description="In Ref. 2; CAA77991." evidence="28" ref="2">
    <original>R</original>
    <variation>G</variation>
    <location>
        <position position="218"/>
    </location>
</feature>
<feature type="sequence conflict" description="In Ref. 2; CAA77991." evidence="28" ref="2">
    <original>A</original>
    <variation>S</variation>
    <location>
        <position position="225"/>
    </location>
</feature>
<feature type="sequence conflict" description="In Ref. 4; AA sequence." evidence="28" ref="4">
    <original>S</original>
    <variation>R</variation>
    <location>
        <position position="464"/>
    </location>
</feature>
<feature type="strand" evidence="58">
    <location>
        <begin position="16"/>
        <end position="23"/>
    </location>
</feature>
<feature type="helix" evidence="58">
    <location>
        <begin position="25"/>
        <end position="27"/>
    </location>
</feature>
<feature type="turn" evidence="58">
    <location>
        <begin position="28"/>
        <end position="31"/>
    </location>
</feature>
<feature type="strand" evidence="58">
    <location>
        <begin position="34"/>
        <end position="40"/>
    </location>
</feature>
<feature type="strand" evidence="58">
    <location>
        <begin position="43"/>
        <end position="46"/>
    </location>
</feature>
<feature type="helix" evidence="58">
    <location>
        <begin position="56"/>
        <end position="59"/>
    </location>
</feature>
<feature type="strand" evidence="45">
    <location>
        <begin position="63"/>
        <end position="66"/>
    </location>
</feature>
<feature type="strand" evidence="45">
    <location>
        <begin position="72"/>
        <end position="74"/>
    </location>
</feature>
<feature type="turn" evidence="58">
    <location>
        <begin position="76"/>
        <end position="79"/>
    </location>
</feature>
<feature type="helix" evidence="58">
    <location>
        <begin position="82"/>
        <end position="100"/>
    </location>
</feature>
<feature type="helix" evidence="58">
    <location>
        <begin position="103"/>
        <end position="114"/>
    </location>
</feature>
<feature type="strand" evidence="48">
    <location>
        <begin position="122"/>
        <end position="124"/>
    </location>
</feature>
<feature type="turn" evidence="58">
    <location>
        <begin position="134"/>
        <end position="136"/>
    </location>
</feature>
<feature type="strand" evidence="58">
    <location>
        <begin position="137"/>
        <end position="142"/>
    </location>
</feature>
<feature type="strand" evidence="55">
    <location>
        <begin position="145"/>
        <end position="147"/>
    </location>
</feature>
<feature type="strand" evidence="58">
    <location>
        <begin position="150"/>
        <end position="155"/>
    </location>
</feature>
<feature type="strand" evidence="58">
    <location>
        <begin position="157"/>
        <end position="161"/>
    </location>
</feature>
<feature type="strand" evidence="58">
    <location>
        <begin position="171"/>
        <end position="173"/>
    </location>
</feature>
<feature type="strand" evidence="48">
    <location>
        <begin position="176"/>
        <end position="179"/>
    </location>
</feature>
<feature type="helix" evidence="58">
    <location>
        <begin position="182"/>
        <end position="184"/>
    </location>
</feature>
<feature type="strand" evidence="58">
    <location>
        <begin position="185"/>
        <end position="187"/>
    </location>
</feature>
<feature type="strand" evidence="58">
    <location>
        <begin position="191"/>
        <end position="194"/>
    </location>
</feature>
<feature type="strand" evidence="58">
    <location>
        <begin position="197"/>
        <end position="200"/>
    </location>
</feature>
<feature type="strand" evidence="55">
    <location>
        <begin position="202"/>
        <end position="204"/>
    </location>
</feature>
<feature type="helix" evidence="58">
    <location>
        <begin position="207"/>
        <end position="209"/>
    </location>
</feature>
<feature type="strand" evidence="49">
    <location>
        <begin position="210"/>
        <end position="212"/>
    </location>
</feature>
<feature type="helix" evidence="58">
    <location>
        <begin position="214"/>
        <end position="216"/>
    </location>
</feature>
<feature type="strand" evidence="45">
    <location>
        <begin position="219"/>
        <end position="221"/>
    </location>
</feature>
<feature type="helix" evidence="58">
    <location>
        <begin position="224"/>
        <end position="239"/>
    </location>
</feature>
<feature type="helix" evidence="58">
    <location>
        <begin position="266"/>
        <end position="272"/>
    </location>
</feature>
<feature type="helix" evidence="58">
    <location>
        <begin position="276"/>
        <end position="279"/>
    </location>
</feature>
<feature type="helix" evidence="58">
    <location>
        <begin position="282"/>
        <end position="305"/>
    </location>
</feature>
<feature type="strand" evidence="45">
    <location>
        <begin position="308"/>
        <end position="311"/>
    </location>
</feature>
<feature type="helix" evidence="58">
    <location>
        <begin position="317"/>
        <end position="327"/>
    </location>
</feature>
<feature type="strand" evidence="46">
    <location>
        <begin position="330"/>
        <end position="332"/>
    </location>
</feature>
<feature type="strand" evidence="46">
    <location>
        <begin position="338"/>
        <end position="340"/>
    </location>
</feature>
<feature type="helix" evidence="58">
    <location>
        <begin position="342"/>
        <end position="354"/>
    </location>
</feature>
<feature type="helix" evidence="58">
    <location>
        <begin position="358"/>
        <end position="365"/>
    </location>
</feature>
<feature type="strand" evidence="45">
    <location>
        <begin position="373"/>
        <end position="375"/>
    </location>
</feature>
<feature type="strand" evidence="58">
    <location>
        <begin position="381"/>
        <end position="384"/>
    </location>
</feature>
<feature type="turn" evidence="58">
    <location>
        <begin position="389"/>
        <end position="391"/>
    </location>
</feature>
<feature type="turn" evidence="58">
    <location>
        <begin position="394"/>
        <end position="396"/>
    </location>
</feature>
<feature type="helix" evidence="58">
    <location>
        <begin position="401"/>
        <end position="403"/>
    </location>
</feature>
<feature type="helix" evidence="58">
    <location>
        <begin position="407"/>
        <end position="412"/>
    </location>
</feature>
<feature type="turn" evidence="58">
    <location>
        <begin position="414"/>
        <end position="416"/>
    </location>
</feature>
<feature type="helix" evidence="58">
    <location>
        <begin position="418"/>
        <end position="420"/>
    </location>
</feature>
<feature type="strand" evidence="49">
    <location>
        <begin position="421"/>
        <end position="423"/>
    </location>
</feature>
<feature type="helix" evidence="58">
    <location>
        <begin position="426"/>
        <end position="437"/>
    </location>
</feature>
<feature type="strand" evidence="45">
    <location>
        <begin position="446"/>
        <end position="450"/>
    </location>
</feature>
<feature type="helix" evidence="45">
    <location>
        <begin position="451"/>
        <end position="453"/>
    </location>
</feature>
<feature type="helix" evidence="45">
    <location>
        <begin position="460"/>
        <end position="462"/>
    </location>
</feature>
<feature type="helix" evidence="45">
    <location>
        <begin position="466"/>
        <end position="468"/>
    </location>
</feature>
<feature type="strand" evidence="45">
    <location>
        <begin position="471"/>
        <end position="473"/>
    </location>
</feature>
<feature type="helix" evidence="45">
    <location>
        <begin position="488"/>
        <end position="493"/>
    </location>
</feature>
<feature type="strand" evidence="45">
    <location>
        <begin position="495"/>
        <end position="498"/>
    </location>
</feature>
<feature type="strand" evidence="45">
    <location>
        <begin position="506"/>
        <end position="508"/>
    </location>
</feature>
<feature type="strand" evidence="45">
    <location>
        <begin position="524"/>
        <end position="531"/>
    </location>
</feature>
<feature type="helix" evidence="45">
    <location>
        <begin position="537"/>
        <end position="542"/>
    </location>
</feature>
<feature type="strand" evidence="45">
    <location>
        <begin position="554"/>
        <end position="557"/>
    </location>
</feature>
<feature type="helix" evidence="45">
    <location>
        <begin position="559"/>
        <end position="564"/>
    </location>
</feature>
<feature type="strand" evidence="45">
    <location>
        <begin position="568"/>
        <end position="570"/>
    </location>
</feature>
<feature type="helix" evidence="45">
    <location>
        <begin position="575"/>
        <end position="581"/>
    </location>
</feature>
<feature type="helix" evidence="45">
    <location>
        <begin position="587"/>
        <end position="606"/>
    </location>
</feature>
<feature type="helix" evidence="45">
    <location>
        <begin position="607"/>
        <end position="609"/>
    </location>
</feature>
<feature type="strand" evidence="47">
    <location>
        <begin position="610"/>
        <end position="612"/>
    </location>
</feature>
<feature type="helix" evidence="45">
    <location>
        <begin position="613"/>
        <end position="615"/>
    </location>
</feature>
<feature type="strand" evidence="47">
    <location>
        <begin position="617"/>
        <end position="620"/>
    </location>
</feature>
<feature type="helix" evidence="45">
    <location>
        <begin position="624"/>
        <end position="628"/>
    </location>
</feature>
<feature type="turn" evidence="45">
    <location>
        <begin position="631"/>
        <end position="635"/>
    </location>
</feature>
<feature type="helix" evidence="45">
    <location>
        <begin position="639"/>
        <end position="646"/>
    </location>
</feature>
<feature type="helix" evidence="45">
    <location>
        <begin position="647"/>
        <end position="651"/>
    </location>
</feature>
<feature type="strand" evidence="45">
    <location>
        <begin position="666"/>
        <end position="668"/>
    </location>
</feature>
<feature type="helix" evidence="45">
    <location>
        <begin position="675"/>
        <end position="707"/>
    </location>
</feature>
<feature type="helix" evidence="45">
    <location>
        <begin position="709"/>
        <end position="738"/>
    </location>
</feature>
<feature type="helix" evidence="45">
    <location>
        <begin position="743"/>
        <end position="747"/>
    </location>
</feature>
<feature type="helix" evidence="45">
    <location>
        <begin position="753"/>
        <end position="786"/>
    </location>
</feature>
<feature type="helix" evidence="45">
    <location>
        <begin position="788"/>
        <end position="812"/>
    </location>
</feature>
<feature type="helix" evidence="45">
    <location>
        <begin position="814"/>
        <end position="817"/>
    </location>
</feature>
<feature type="turn" evidence="45">
    <location>
        <begin position="819"/>
        <end position="824"/>
    </location>
</feature>
<feature type="helix" evidence="45">
    <location>
        <begin position="825"/>
        <end position="831"/>
    </location>
</feature>
<feature type="helix" evidence="45">
    <location>
        <begin position="840"/>
        <end position="842"/>
    </location>
</feature>
<feature type="helix" evidence="45">
    <location>
        <begin position="847"/>
        <end position="857"/>
    </location>
</feature>
<feature type="helix" evidence="45">
    <location>
        <begin position="860"/>
        <end position="863"/>
    </location>
</feature>
<feature type="strand" evidence="45">
    <location>
        <begin position="864"/>
        <end position="870"/>
    </location>
</feature>
<feature type="strand" evidence="45">
    <location>
        <begin position="872"/>
        <end position="877"/>
    </location>
</feature>
<feature type="strand" evidence="45">
    <location>
        <begin position="879"/>
        <end position="881"/>
    </location>
</feature>
<feature type="strand" evidence="45">
    <location>
        <begin position="884"/>
        <end position="887"/>
    </location>
</feature>
<feature type="strand" evidence="54">
    <location>
        <begin position="891"/>
        <end position="893"/>
    </location>
</feature>
<feature type="strand" evidence="45">
    <location>
        <begin position="897"/>
        <end position="901"/>
    </location>
</feature>
<feature type="strand" evidence="45">
    <location>
        <begin position="909"/>
        <end position="912"/>
    </location>
</feature>
<feature type="strand" evidence="56">
    <location>
        <begin position="915"/>
        <end position="917"/>
    </location>
</feature>
<feature type="strand" evidence="54">
    <location>
        <begin position="918"/>
        <end position="923"/>
    </location>
</feature>
<feature type="strand" evidence="45">
    <location>
        <begin position="926"/>
        <end position="933"/>
    </location>
</feature>
<feature type="helix" evidence="45">
    <location>
        <begin position="939"/>
        <end position="941"/>
    </location>
</feature>
<feature type="helix" evidence="45">
    <location>
        <begin position="942"/>
        <end position="947"/>
    </location>
</feature>
<feature type="strand" evidence="45">
    <location>
        <begin position="949"/>
        <end position="957"/>
    </location>
</feature>
<feature type="strand" evidence="45">
    <location>
        <begin position="960"/>
        <end position="967"/>
    </location>
</feature>
<feature type="strand" evidence="45">
    <location>
        <begin position="970"/>
        <end position="976"/>
    </location>
</feature>
<feature type="strand" evidence="50">
    <location>
        <begin position="978"/>
        <end position="980"/>
    </location>
</feature>
<feature type="strand" evidence="45">
    <location>
        <begin position="982"/>
        <end position="988"/>
    </location>
</feature>
<feature type="strand" evidence="52">
    <location>
        <begin position="991"/>
        <end position="995"/>
    </location>
</feature>
<feature type="strand" evidence="45">
    <location>
        <begin position="1003"/>
        <end position="1009"/>
    </location>
</feature>
<feature type="strand" evidence="45">
    <location>
        <begin position="1011"/>
        <end position="1018"/>
    </location>
</feature>
<feature type="strand" evidence="45">
    <location>
        <begin position="1021"/>
        <end position="1027"/>
    </location>
</feature>
<feature type="strand" evidence="45">
    <location>
        <begin position="1038"/>
        <end position="1047"/>
    </location>
</feature>
<feature type="strand" evidence="45">
    <location>
        <begin position="1054"/>
        <end position="1064"/>
    </location>
</feature>
<feature type="helix" evidence="45">
    <location>
        <begin position="1068"/>
        <end position="1079"/>
    </location>
</feature>
<feature type="strand" evidence="45">
    <location>
        <begin position="1089"/>
        <end position="1091"/>
    </location>
</feature>
<feature type="strand" evidence="51">
    <location>
        <begin position="1093"/>
        <end position="1095"/>
    </location>
</feature>
<feature type="strand" evidence="45">
    <location>
        <begin position="1097"/>
        <end position="1102"/>
    </location>
</feature>
<feature type="helix" evidence="51">
    <location>
        <begin position="1103"/>
        <end position="1105"/>
    </location>
</feature>
<feature type="strand" evidence="45">
    <location>
        <begin position="1108"/>
        <end position="1112"/>
    </location>
</feature>
<feature type="strand" evidence="45">
    <location>
        <begin position="1116"/>
        <end position="1123"/>
    </location>
</feature>
<feature type="strand" evidence="45">
    <location>
        <begin position="1145"/>
        <end position="1149"/>
    </location>
</feature>
<feature type="strand" evidence="56">
    <location>
        <begin position="1152"/>
        <end position="1154"/>
    </location>
</feature>
<feature type="strand" evidence="57">
    <location>
        <begin position="1158"/>
        <end position="1160"/>
    </location>
</feature>
<feature type="strand" evidence="45">
    <location>
        <begin position="1166"/>
        <end position="1173"/>
    </location>
</feature>
<feature type="strand" evidence="45">
    <location>
        <begin position="1176"/>
        <end position="1183"/>
    </location>
</feature>
<feature type="strand" evidence="45">
    <location>
        <begin position="1188"/>
        <end position="1192"/>
    </location>
</feature>
<feature type="strand" evidence="45">
    <location>
        <begin position="1194"/>
        <end position="1198"/>
    </location>
</feature>
<feature type="strand" evidence="54">
    <location>
        <begin position="1202"/>
        <end position="1205"/>
    </location>
</feature>
<feature type="strand" evidence="45">
    <location>
        <begin position="1208"/>
        <end position="1211"/>
    </location>
</feature>
<feature type="strand" evidence="53">
    <location>
        <begin position="1215"/>
        <end position="1217"/>
    </location>
</feature>
<feature type="strand" evidence="45">
    <location>
        <begin position="1221"/>
        <end position="1231"/>
    </location>
</feature>
<feature type="strand" evidence="45">
    <location>
        <begin position="1234"/>
        <end position="1246"/>
    </location>
</feature>
<feature type="strand" evidence="55">
    <location>
        <begin position="1248"/>
        <end position="1250"/>
    </location>
</feature>
<feature type="strand" evidence="45">
    <location>
        <begin position="1251"/>
        <end position="1260"/>
    </location>
</feature>
<feature type="helix" evidence="45">
    <location>
        <begin position="1263"/>
        <end position="1266"/>
    </location>
</feature>
<feature type="strand" evidence="45">
    <location>
        <begin position="1269"/>
        <end position="1271"/>
    </location>
</feature>
<feature type="strand" evidence="45">
    <location>
        <begin position="1280"/>
        <end position="1283"/>
    </location>
</feature>
<evidence type="ECO:0000250" key="1">
    <source>
        <dbReference type="UniProtKB" id="P0DPI0"/>
    </source>
</evidence>
<evidence type="ECO:0000255" key="2">
    <source>
        <dbReference type="PROSITE-ProRule" id="PRU10095"/>
    </source>
</evidence>
<evidence type="ECO:0000269" key="3">
    <source>
    </source>
</evidence>
<evidence type="ECO:0000269" key="4">
    <source>
    </source>
</evidence>
<evidence type="ECO:0000269" key="5">
    <source>
    </source>
</evidence>
<evidence type="ECO:0000269" key="6">
    <source>
    </source>
</evidence>
<evidence type="ECO:0000269" key="7">
    <source>
    </source>
</evidence>
<evidence type="ECO:0000269" key="8">
    <source>
    </source>
</evidence>
<evidence type="ECO:0000269" key="9">
    <source>
    </source>
</evidence>
<evidence type="ECO:0000269" key="10">
    <source>
    </source>
</evidence>
<evidence type="ECO:0000269" key="11">
    <source>
    </source>
</evidence>
<evidence type="ECO:0000269" key="12">
    <source>
    </source>
</evidence>
<evidence type="ECO:0000269" key="13">
    <source>
    </source>
</evidence>
<evidence type="ECO:0000269" key="14">
    <source>
    </source>
</evidence>
<evidence type="ECO:0000269" key="15">
    <source>
    </source>
</evidence>
<evidence type="ECO:0000269" key="16">
    <source>
    </source>
</evidence>
<evidence type="ECO:0000269" key="17">
    <source>
    </source>
</evidence>
<evidence type="ECO:0000269" key="18">
    <source>
    </source>
</evidence>
<evidence type="ECO:0000269" key="19">
    <source>
    </source>
</evidence>
<evidence type="ECO:0000269" key="20">
    <source>
    </source>
</evidence>
<evidence type="ECO:0000269" key="21">
    <source>
    </source>
</evidence>
<evidence type="ECO:0000269" key="22">
    <source>
    </source>
</evidence>
<evidence type="ECO:0000269" key="23">
    <source>
    </source>
</evidence>
<evidence type="ECO:0000269" key="24">
    <source>
    </source>
</evidence>
<evidence type="ECO:0000269" key="25">
    <source>
    </source>
</evidence>
<evidence type="ECO:0000269" key="26">
    <source>
    </source>
</evidence>
<evidence type="ECO:0000303" key="27">
    <source>
    </source>
</evidence>
<evidence type="ECO:0000305" key="28"/>
<evidence type="ECO:0000305" key="29">
    <source>
    </source>
</evidence>
<evidence type="ECO:0000305" key="30">
    <source>
    </source>
</evidence>
<evidence type="ECO:0000305" key="31">
    <source>
    </source>
</evidence>
<evidence type="ECO:0000305" key="32">
    <source>
    </source>
</evidence>
<evidence type="ECO:0000305" key="33">
    <source>
    </source>
</evidence>
<evidence type="ECO:0000305" key="34">
    <source>
    </source>
</evidence>
<evidence type="ECO:0000305" key="35">
    <source>
    </source>
</evidence>
<evidence type="ECO:0000305" key="36">
    <source>
    </source>
</evidence>
<evidence type="ECO:0000305" key="37">
    <source>
    </source>
</evidence>
<evidence type="ECO:0000305" key="38">
    <source>
    </source>
</evidence>
<evidence type="ECO:0000305" key="39">
    <source>
    </source>
</evidence>
<evidence type="ECO:0007744" key="40">
    <source>
        <dbReference type="PDB" id="1EPW"/>
    </source>
</evidence>
<evidence type="ECO:0007744" key="41">
    <source>
        <dbReference type="PDB" id="1F31"/>
    </source>
</evidence>
<evidence type="ECO:0007744" key="42">
    <source>
        <dbReference type="PDB" id="2NM1"/>
    </source>
</evidence>
<evidence type="ECO:0007744" key="43">
    <source>
        <dbReference type="PDB" id="2NP0"/>
    </source>
</evidence>
<evidence type="ECO:0007744" key="44">
    <source>
        <dbReference type="PDB" id="4KBB"/>
    </source>
</evidence>
<evidence type="ECO:0007829" key="45">
    <source>
        <dbReference type="PDB" id="1EPW"/>
    </source>
</evidence>
<evidence type="ECO:0007829" key="46">
    <source>
        <dbReference type="PDB" id="1F82"/>
    </source>
</evidence>
<evidence type="ECO:0007829" key="47">
    <source>
        <dbReference type="PDB" id="1G9B"/>
    </source>
</evidence>
<evidence type="ECO:0007829" key="48">
    <source>
        <dbReference type="PDB" id="1G9D"/>
    </source>
</evidence>
<evidence type="ECO:0007829" key="49">
    <source>
        <dbReference type="PDB" id="1S0E"/>
    </source>
</evidence>
<evidence type="ECO:0007829" key="50">
    <source>
        <dbReference type="PDB" id="1S0F"/>
    </source>
</evidence>
<evidence type="ECO:0007829" key="51">
    <source>
        <dbReference type="PDB" id="1Z0H"/>
    </source>
</evidence>
<evidence type="ECO:0007829" key="52">
    <source>
        <dbReference type="PDB" id="2NM1"/>
    </source>
</evidence>
<evidence type="ECO:0007829" key="53">
    <source>
        <dbReference type="PDB" id="5VID"/>
    </source>
</evidence>
<evidence type="ECO:0007829" key="54">
    <source>
        <dbReference type="PDB" id="5VMR"/>
    </source>
</evidence>
<evidence type="ECO:0007829" key="55">
    <source>
        <dbReference type="PDB" id="6G5G"/>
    </source>
</evidence>
<evidence type="ECO:0007829" key="56">
    <source>
        <dbReference type="PDB" id="6QNS"/>
    </source>
</evidence>
<evidence type="ECO:0007829" key="57">
    <source>
        <dbReference type="PDB" id="6UL4"/>
    </source>
</evidence>
<evidence type="ECO:0007829" key="58">
    <source>
        <dbReference type="PDB" id="7NA9"/>
    </source>
</evidence>
<proteinExistence type="evidence at protein level"/>
<accession>P10844</accession>
<accession>P10843</accession>
<sequence length="1291" mass="150803">MPVTINNFNYNDPIDNNNIIMMEPPFARGTGRYYKAFKITDRIWIIPERYTFGYKPEDFNKSSGIFNRDVCEYYDPDYLNTNDKKNIFLQTMIKLFNRIKSKPLGEKLLEMIINGIPYLGDRRVPLEEFNTNIASVTVNKLISNPGEVERKKGIFANLIIFGPGPVLNENETIDIGIQNHFASREGFGGIMQMKFCPEYVSVFNNVQENKGASIFNRRGYFSDPALILMHELIHVLHGLYGIKVDDLPIVPNEKKFFMQSTDAIQAEELYTFGGQDPSIITPSTDKSIYDKVLQNFRGIVDRLNKVLVCISDPNININIYKNKFKDKYKFVEDSEGKYSIDVESFDKLYKSLMFGFTETNIAENYKIKTRASYFSDSLPPVKIKNLLDNEIYTIEEGFNISDKDMEKEYRGQNKAINKQAYEEISKEHLAVYKIQMCKSVKAPGICIDVDNEDLFFIADKNSFSDDLSKNERIEYNTQSNYIENDFPINELILDTDLISKIELPSENTESLTDFNVDVPVYEKQPAIKKIFTDENTIFQYLYSQTFPLDIRDISLTSSFDDALLFSNKVYSFFSMDYIKTANKVVEAGLFAGWVKQIVNDFVIEANKSNTMDKIADISLIVPYIGLALNVGNETAKGNFENAFEIAGASILLEFIPELLIPVVGAFLLESYIDNKNKIIKTIDNALTKRNEKWSDMYGLIVAQWLSTVNTQFYTIKEGMYKALNYQAQALEEIIKYRYNIYSEKEKSNINIDFNDINSKLNEGINQAIDNINNFINGCSVSYLMKKMIPLAVEKLLDFDNTLKKNLLNYIDENKLYLIGSAEYEKSKVNKYLKTIMPFDLSIYTNDTILIEMFNKYNSEILNNIILNLRYKDNNLIDLSGYGAKVEVYDGVELNDKNQFKLTSSANSKIRVTQNQNIIFNSVFLDFSVSFWIRIPKYKNDGIQNYIHNEYTIINCMKNNSGWKISIRGNRIIWTLIDINGKTKSVFFEYNIREDISEYINRWFFVTITNNLNNAKIYINGKLESNTDIKDIREVIANGEIIFKLDGDIDRTQFIWMKYFSIFNTELSQSNIEERYKIQSYSEYLKDFWGNPLMYNKEYYMFNAGNKNSYIKLKKDSPVGEILTRSKYNQNSKYINYRDLYIGEKFIIRRKSNSQSINDDIVRKEDYIYLDFFNLNQEWRVYTYKYFKKEEEKLFLAPISDSDEFYNTIQIKEYDEQPTYSCQLLFKKDEESTDEIGLIGIHRFYESGIVFEEYKDYFCISKWYLKEVKRKPYNLKLGCNWQFIPKDEGWTE</sequence>
<name>BXB_CLOBO</name>
<reference key="1">
    <citation type="journal article" date="1992" name="Appl. Environ. Microbiol.">
        <title>Molecular cloning of the Clostridium botulinum structural gene encoding the type B neurotoxin and determination of its entire nucleotide sequence.</title>
        <authorList>
            <person name="Whelan S.M."/>
            <person name="Elmore M.J."/>
            <person name="Bodsworth N.J."/>
            <person name="Brehm J.K."/>
            <person name="Atkinson T."/>
            <person name="Minton N.P."/>
        </authorList>
    </citation>
    <scope>NUCLEOTIDE SEQUENCE [GENOMIC DNA]</scope>
    <source>
        <strain>Danish / Type B</strain>
    </source>
</reference>
<reference key="2">
    <citation type="submission" date="1992-04" db="EMBL/GenBank/DDBJ databases">
        <authorList>
            <person name="Szabo E.A."/>
            <person name="Pemberton J.M."/>
            <person name="Desmarchelier P.M."/>
        </authorList>
    </citation>
    <scope>NUCLEOTIDE SEQUENCE [GENOMIC DNA] OF 36-246</scope>
    <source>
        <strain>NCTC 7273 / Type B</strain>
    </source>
</reference>
<reference key="3">
    <citation type="journal article" date="1993" name="J. Clin. Microbiol.">
        <title>Gene probes for identification of the botulinal neurotoxin gene and specific identification of neurotoxin types B, E, and F.</title>
        <authorList>
            <person name="Campbell K.D."/>
            <person name="Collins M.D."/>
            <person name="East A.K."/>
        </authorList>
    </citation>
    <scope>NUCLEOTIDE SEQUENCE [GENOMIC DNA] OF 634-994</scope>
    <source>
        <strain>NCTC 7273 / Type B</strain>
    </source>
</reference>
<reference key="4">
    <citation type="journal article" date="1988" name="Biochimie">
        <title>Botulinum neurotoxin type B (strain 657): partial sequence and similarity with tetanus toxin.</title>
        <authorList>
            <person name="Dasgupta B.R."/>
            <person name="Datta A."/>
        </authorList>
    </citation>
    <scope>PROTEIN SEQUENCE OF 2-45 AND 442-467</scope>
    <scope>SUBUNIT</scope>
    <scope>SUBCELLULAR LOCATION</scope>
    <scope>DISULFIDE BOND</scope>
    <source>
        <strain>B-657 / Type B</strain>
    </source>
</reference>
<reference key="5">
    <citation type="journal article" date="1985" name="J. Biol. Chem.">
        <title>Separation, purification, partial characterization and comparison of the heavy and light chains of botulinum neurotoxin types A, B, and E.</title>
        <authorList>
            <person name="Sathyamoorthy V."/>
            <person name="DasGupta B.R."/>
        </authorList>
    </citation>
    <scope>RELEASED AS SINGLE CHAIN</scope>
    <source>
        <strain>Okra / Type B1</strain>
    </source>
</reference>
<reference key="6">
    <citation type="journal article" date="1985" name="Proc. Natl. Acad. Sci. U.S.A.">
        <title>Channels formed by botulinum, tetanus, and diphtheria toxins in planar lipid bilayers: relevance to translocation of proteins across membranes.</title>
        <authorList>
            <person name="Hoch D.H."/>
            <person name="Romero-Mira M."/>
            <person name="Ehrlich B.E."/>
            <person name="Finkelstein A."/>
            <person name="DasGupta B.R."/>
            <person name="Simpson L.L."/>
        </authorList>
    </citation>
    <scope>FUNCTION (BOTULINUM NEUROTOXIN TYPE B AND BOTULINUM NEUROTOXIN B HEAVY CHAIN)</scope>
    <scope>DOMAIN</scope>
    <source>
        <strain>Type B</strain>
    </source>
</reference>
<reference key="7">
    <citation type="journal article" date="1992" name="J. Biol. Chem.">
        <title>Botulinum neurotoxins are zinc proteins.</title>
        <authorList>
            <person name="Schiavo G."/>
            <person name="Rossetto O."/>
            <person name="Santucci A."/>
            <person name="Dasgupta B.R."/>
            <person name="Montecucco C."/>
        </authorList>
    </citation>
    <scope>IDENTIFICATION AS A ZINC-BINDING PROTEIN</scope>
    <scope>COFACTOR</scope>
    <source>
        <strain>Type B</strain>
    </source>
</reference>
<reference key="8">
    <citation type="journal article" date="1992" name="J. Infect. Dis.">
        <title>Clinical and laboratory comparison of botulism from toxin types A, B, and E in the United States, 1975-1988.</title>
        <authorList>
            <person name="Woodruff B.A."/>
            <person name="Griffin P.M."/>
            <person name="McCroskey L.M."/>
            <person name="Smart J.F."/>
            <person name="Wainwright R.B."/>
            <person name="Bryant R.G."/>
            <person name="Hutwagner L.C."/>
            <person name="Hatheway C.L."/>
        </authorList>
    </citation>
    <scope>HOST RANGE</scope>
    <scope>EPIDEMIOLOGY</scope>
</reference>
<reference key="9">
    <citation type="journal article" date="1992" name="Nature">
        <title>Tetanus and botulinum-B neurotoxins block neurotransmitter release by proteolytic cleavage of synaptobrevin.</title>
        <authorList>
            <person name="Schiavo G."/>
            <person name="Benfenati F."/>
            <person name="Poulain B."/>
            <person name="Rossetto O."/>
            <person name="de Laureto P.P."/>
            <person name="Dasgupta B.R."/>
            <person name="Montecucco C."/>
        </authorList>
    </citation>
    <scope>FUNCTION (BOTULINUM NEUROTOXIN B LIGHT CHAIN)</scope>
    <scope>IDENTIFICATION OF SUBSTRATE</scope>
    <scope>CATALYTIC ACTIVITY</scope>
    <scope>ACTIVITY REGULATION</scope>
    <scope>SUBUNIT</scope>
    <scope>SUBCELLULAR LOCATION (BOTULINUM NEUROTOXIN B LIGHT CHAIN)</scope>
    <source>
        <strain>Type B</strain>
    </source>
</reference>
<reference key="10">
    <citation type="journal article" date="1994" name="Biochemistry">
        <title>Differences in the protease activities of tetanus and botulinum B toxins revealed by the cleavage of vesicle-associated membrane protein and various sized fragments.</title>
        <authorList>
            <person name="Foran P."/>
            <person name="Shone C.C."/>
            <person name="Dolly J.O."/>
        </authorList>
    </citation>
    <scope>FUNCTION (BOTULINUM NEUROTOXIN TYPE B)</scope>
    <scope>SUBSTRATE SPECIFICITY</scope>
</reference>
<reference key="11">
    <citation type="journal article" date="1994" name="J. Biol. Chem.">
        <title>Identification of protein receptor for Clostridium botulinum type B neurotoxin in rat brain synaptosomes.</title>
        <authorList>
            <person name="Nishiki T."/>
            <person name="Kamata Y."/>
            <person name="Nemoto Y."/>
            <person name="Omori A."/>
            <person name="Ito T."/>
            <person name="Takahashi M."/>
            <person name="Kozaki S."/>
        </authorList>
    </citation>
    <scope>IDENTIFICATION OF HOST RECEPTOR (BOTULINUM NEUROTOXIN TYPE B)</scope>
    <scope>INTERACTION WITH HOST SYT1</scope>
    <scope>SUBCELLULAR LOCATION (BOTULINUM NEUROTOXIN B LIGHT CHAIN)</scope>
    <source>
        <strain>Type B</strain>
    </source>
</reference>
<reference key="12">
    <citation type="journal article" date="1999" name="J. Cell Sci.">
        <title>Functional characterisation of tetanus and botulinum neurotoxins binding domains.</title>
        <authorList>
            <person name="Lalli G."/>
            <person name="Herreros J."/>
            <person name="Osborne S.L."/>
            <person name="Montecucco C."/>
            <person name="Rossetto O."/>
            <person name="Schiavo G."/>
        </authorList>
    </citation>
    <scope>FUNCTION (BOTULINUM NEUROTOXIN B HEAVY CHAIN)</scope>
    <scope>LIPID-BINDING</scope>
    <source>
        <strain>B600 / Type B</strain>
    </source>
</reference>
<reference key="13">
    <citation type="journal article" date="2000" name="Nat. Struct. Biol.">
        <title>Cocrystal structure of synaptobrevin-II bound to botulinum neurotoxin type B at 2.0 A resolution.</title>
        <authorList>
            <person name="Hanson M.A."/>
            <person name="Stevens R.C."/>
        </authorList>
    </citation>
    <scope>RETRACTED PAPER</scope>
</reference>
<reference key="14">
    <citation type="journal article" date="2009" name="Nat. Struct. Mol. Biol.">
        <title>Retraction: Cocrystal structure of synaptobrevin-II bound to botulinum neurotoxin type B at 2.0 A resolution.</title>
        <authorList>
            <person name="Hanson M.A."/>
            <person name="Stevens R.C."/>
        </authorList>
    </citation>
    <scope>RETRACTION NOTICE OF PUBMED:10932255</scope>
</reference>
<reference key="15">
    <citation type="journal article" date="2003" name="J. Cell Biol.">
        <title>Synaptotagmins I and II mediate entry of botulinum neurotoxin B into cells.</title>
        <authorList>
            <person name="Dong M."/>
            <person name="Richards D.A."/>
            <person name="Goodnough M.C."/>
            <person name="Tepp W.H."/>
            <person name="Johnson E.A."/>
            <person name="Chapman E.R."/>
        </authorList>
    </citation>
    <scope>FUNCTION</scope>
    <scope>IDENTIFICATION OF HOST RECEPTOR (BOTULINUM NEUROTOXIN TYPE B AND BOTULINUM NEUROTOXIN B HEAVY CHAIN)</scope>
    <scope>INTERACTION WITH HOST SYT1 AND SYT2</scope>
    <scope>SUBCELLULAR LOCATION (BOTULINUM NEUROTOXIN TYPE B)</scope>
    <source>
        <strain>Type B</strain>
    </source>
</reference>
<reference key="16">
    <citation type="journal article" date="2004" name="J. Biol. Chem.">
        <title>Synaptotagmins I and II act as nerve cell receptors for botulinum neurotoxin G.</title>
        <authorList>
            <person name="Rummel A."/>
            <person name="Karnath T."/>
            <person name="Henke T."/>
            <person name="Bigalke H."/>
            <person name="Binz T."/>
        </authorList>
    </citation>
    <scope>FUNCTION (BOTULINUM NEUROTOXIN TYPE B AND BOTULINUM NEUROTOXIN B HEAVY CHAIN)</scope>
    <scope>INTERACTION WITH HOST SYT1 AND SYT2</scope>
    <source>
        <strain>Type B</strain>
    </source>
</reference>
<reference key="17">
    <citation type="journal article" date="2004" name="Mol. Microbiol.">
        <title>The HCC-domain of botulinum neurotoxins A and B exhibits a singular ganglioside binding site displaying serotype specific carbohydrate interaction.</title>
        <authorList>
            <person name="Rummel A."/>
            <person name="Mahrhold S."/>
            <person name="Bigalke H."/>
            <person name="Binz T."/>
        </authorList>
    </citation>
    <scope>FUNCTION</scope>
    <scope>GANGLIOSIDE-BINDING (BOTULINUM NEUROTOXIN A HEAVY CHAIN)</scope>
    <scope>MUTAGENESIS OF GLU-1189; GLU-1190; HIS-1241; SER-1260; TRP-1262 AND TYR-1263</scope>
    <source>
        <strain>Okra / Type B1</strain>
    </source>
</reference>
<reference key="18">
    <citation type="journal article" date="2007" name="PLoS Pathog.">
        <title>Botulinum neurotoxin heavy chain belt as an intramolecular chaperone for the light chain.</title>
        <authorList>
            <person name="Brunger A.T."/>
            <person name="Breidenbach M.A."/>
            <person name="Jin R."/>
            <person name="Fischer A."/>
            <person name="Santos J.S."/>
            <person name="Montal M."/>
        </authorList>
    </citation>
    <scope>DISCUSSION OF BELT FUNCTION</scope>
    <scope>DOMAIN</scope>
</reference>
<reference key="19">
    <citation type="journal article" date="2007" name="Proc. Natl. Acad. Sci. U.S.A.">
        <title>Identification of the protein receptor binding site of botulinum neurotoxins B and G proves the double-receptor concept.</title>
        <authorList>
            <person name="Rummel A."/>
            <person name="Eichner T."/>
            <person name="Weil T."/>
            <person name="Karnath T."/>
            <person name="Gutcaits A."/>
            <person name="Mahrhold S."/>
            <person name="Sandhoff K."/>
            <person name="Proia R.L."/>
            <person name="Acharya K.R."/>
            <person name="Bigalke H."/>
            <person name="Binz T."/>
        </authorList>
    </citation>
    <scope>FUNCTION (BOTULINUM NEUROTOXIN TYPE B AND BOTULINUM NEUROTOXIN B HEAVY CHAIN)</scope>
    <scope>INTERACTION WITH HOST SYT1 AND SYT2</scope>
    <scope>MUTAGENESIS OF VAL-1118; TYR-1183; GLU-1191; LYS-1192 AND TRP-1262</scope>
    <source>
        <strain>Type B</strain>
    </source>
</reference>
<reference key="20">
    <citation type="journal article" date="2009" name="Biochemistry">
        <title>Glycosylated SV2 and gangliosides as dual receptors for botulinum neurotoxin serotype F.</title>
        <authorList>
            <person name="Fu Z."/>
            <person name="Chen C."/>
            <person name="Barbieri J.T."/>
            <person name="Kim J.J."/>
            <person name="Baldwin M.R."/>
        </authorList>
    </citation>
    <scope>FUNCTION (BOTULINUM NEUROTOXIN B HEAVY CHAIN)</scope>
    <scope>INTERACTION WITH HOST SV2 AND SYT1</scope>
</reference>
<reference key="21">
    <citation type="journal article" date="2009" name="J. Neurochem.">
        <title>Botulinum neurotoxins C, E and F bind gangliosides via a conserved binding site prior to stimulation-dependent uptake with botulinum neurotoxin F utilising the three isoforms of SV2 as second receptor.</title>
        <authorList>
            <person name="Rummel A."/>
            <person name="Haefner K."/>
            <person name="Mahrhold S."/>
            <person name="Darashchonak N."/>
            <person name="Holt M."/>
            <person name="Jahn R."/>
            <person name="Beermann S."/>
            <person name="Karnath T."/>
            <person name="Bigalke H."/>
            <person name="Binz T."/>
        </authorList>
    </citation>
    <scope>FUNCTION (BOTULINUM NEUROTOXIN TYPE B AND BOTULINUM NEUROTOXIN B HEAVY CHAIN)</scope>
    <scope>MUTAGENESIS OF LYS-1192 AND TRP-1262</scope>
</reference>
<reference key="22">
    <citation type="journal article" date="2011" name="Cell Host Microbe">
        <title>Receptor binding enables botulinum neurotoxin B to sense low pH for translocation channel assembly.</title>
        <authorList>
            <person name="Sun S."/>
            <person name="Suresh S."/>
            <person name="Liu H."/>
            <person name="Tepp W.H."/>
            <person name="Johnson E.A."/>
            <person name="Edwardson J.M."/>
            <person name="Chapman E.R."/>
        </authorList>
    </citation>
    <scope>FUNCTION (BOTULINUM NEUROTOXIN TYPE B AND BOTULINUM NEUROTOXIN B HEAVY CHAIN)</scope>
    <scope>ACTIVITY REGULATION</scope>
    <scope>SUBUNIT</scope>
    <scope>SUBCELLULAR LOCATION</scope>
    <source>
        <strain>Type B</strain>
    </source>
</reference>
<reference key="23">
    <citation type="journal article" date="2012" name="Biochemistry">
        <title>Botulinum neurotoxins B and E translocate at different rates and exhibit divergent responses to GT1b and low pH.</title>
        <authorList>
            <person name="Sun S."/>
            <person name="Tepp W.H."/>
            <person name="Johnson E.A."/>
            <person name="Chapman E.R."/>
        </authorList>
    </citation>
    <scope>FUNCTION (BOTULINUM NEUROTOXIN TYPE B)</scope>
    <scope>SUBUNIT</scope>
    <source>
        <strain>Type B</strain>
    </source>
</reference>
<reference key="24">
    <citation type="journal article" date="2012" name="Microbiol. Immunol.">
        <title>Specificity of botulinum protease for human VAMP family proteins.</title>
        <authorList>
            <person name="Yamamoto H."/>
            <person name="Ida T."/>
            <person name="Tsutsuki H."/>
            <person name="Mori M."/>
            <person name="Matsumoto T."/>
            <person name="Kohda T."/>
            <person name="Mukamoto M."/>
            <person name="Goshima N."/>
            <person name="Kozaki S."/>
            <person name="Ihara H."/>
        </authorList>
    </citation>
    <scope>FUNCTION (BOTULINUM NEUROTOXIN B LIGHT CHAIN)</scope>
    <scope>SUBSTRATE SPECIFICITY</scope>
    <scope>BIOPHYSICOCHEMICAL PROPERTIES</scope>
</reference>
<reference key="25">
    <citation type="journal article" date="2017" name="Pharmacol. Rev.">
        <title>Botulinum neurotoxins: Biology, pharmacology, and toxicology.</title>
        <authorList>
            <person name="Pirazzini M."/>
            <person name="Rossetto O."/>
            <person name="Eleopra R."/>
            <person name="Montecucco C."/>
        </authorList>
    </citation>
    <scope>REVIEW</scope>
</reference>
<reference evidence="40 41" key="26">
    <citation type="journal article" date="2000" name="Nat. Struct. Biol.">
        <title>Structural analysis of the catalytic and binding sites of Clostridium botulinum neurotoxin B.</title>
        <authorList>
            <person name="Swaminathan S."/>
            <person name="Eswaramoorthy S."/>
        </authorList>
    </citation>
    <scope>X-RAY CRYSTALLOGRAPHY (1.90 ANGSTROMS) OF 2-1291 IN COMPLEX WITH ZINC AND GANGLIOSIDE ANALOG</scope>
    <scope>FUNCTION (BOTULINUM NEUROTOXIN B HEAVY CHAIN)</scope>
    <scope>COFACTOR</scope>
    <scope>DOMAIN</scope>
    <scope>GLYCAN-BINDING</scope>
</reference>
<reference evidence="42" key="27">
    <citation type="journal article" date="2006" name="Nature">
        <title>Botulinum neurotoxin B recognizes its protein receptor with high affinity and specificity.</title>
        <authorList>
            <person name="Jin R."/>
            <person name="Rummel A."/>
            <person name="Binz T."/>
            <person name="Brunger A.T."/>
        </authorList>
    </citation>
    <scope>X-RAY CRYSTALLOGRAPHY (2.15 ANGSTROMS) OF 858-1291 IN COMPLEX WITH SYT2 RECEPTOR FRAGMENT</scope>
    <scope>FUNCTION (BOTULINUM NEUROTOXIN TYPE B AND BOTULINUM NEUROTOXIN B HEAVY CHAIN)</scope>
    <scope>SUBUNIT</scope>
    <scope>MUTAGENESIS OF VAL-1118; LYS-1192; PHE-1194; ALA-1196; SER-1199 AND PHE-1204</scope>
    <source>
        <strain>Type B</strain>
    </source>
</reference>
<reference evidence="43" key="28">
    <citation type="journal article" date="2006" name="Nature">
        <title>Structural basis of cell surface receptor recognition by botulinum neurotoxin B.</title>
        <authorList>
            <person name="Chai Q."/>
            <person name="Arndt J.W."/>
            <person name="Dong M."/>
            <person name="Tepp W.H."/>
            <person name="Johnson E.A."/>
            <person name="Chapman E.R."/>
            <person name="Stevens R.C."/>
        </authorList>
    </citation>
    <scope>X-RAY CRYSTALLOGRAPHY (2.62 ANGSTROMS) OF 2-1291 IN COMPLEX WITH ZINC AND SYT2 RECEPTOR FRAGMENT</scope>
    <scope>FUNCTION (BOTULINUM NEUROTOXIN TYPE B AND BOTULINUM NEUROTOXIN B HEAVY CHAIN)</scope>
    <scope>COFACTOR</scope>
    <scope>SUBUNIT</scope>
    <scope>DISULFIDE BOND</scope>
</reference>
<reference evidence="44" key="29">
    <citation type="journal article" date="2013" name="Nat. Commun.">
        <title>Structure of dual receptor binding to botulinum neurotoxin B.</title>
        <authorList>
            <person name="Berntsson R.P."/>
            <person name="Peng L."/>
            <person name="Dong M."/>
            <person name="Stenmark P."/>
        </authorList>
    </citation>
    <scope>X-RAY CRYSTALLOGRAPHY (2.30 ANGSTROMS) OF 857-1291 IN COMPLEX WITH CORECEPTORS SYT2 AND GANGLIOSIDE GD1A</scope>
    <scope>FUNCTION (BOTULINUM NEUROTOXIN B HEAVY CHAIN)</scope>
    <scope>SUBUNIT</scope>
    <source>
        <strain>Okra / Type B1</strain>
    </source>
</reference>
<organism>
    <name type="scientific">Clostridium botulinum</name>
    <dbReference type="NCBI Taxonomy" id="1491"/>
    <lineage>
        <taxon>Bacteria</taxon>
        <taxon>Bacillati</taxon>
        <taxon>Bacillota</taxon>
        <taxon>Clostridia</taxon>
        <taxon>Eubacteriales</taxon>
        <taxon>Clostridiaceae</taxon>
        <taxon>Clostridium</taxon>
    </lineage>
</organism>
<gene>
    <name evidence="27" type="primary">botB</name>
</gene>
<dbReference type="EC" id="3.4.24.69" evidence="6"/>
<dbReference type="EMBL" id="M81186">
    <property type="protein sequence ID" value="AAA23211.1"/>
    <property type="molecule type" value="Genomic_DNA"/>
</dbReference>
<dbReference type="EMBL" id="Z11934">
    <property type="protein sequence ID" value="CAA77991.1"/>
    <property type="molecule type" value="Genomic_DNA"/>
</dbReference>
<dbReference type="EMBL" id="X70817">
    <property type="protein sequence ID" value="CAA50148.1"/>
    <property type="molecule type" value="Genomic_DNA"/>
</dbReference>
<dbReference type="PIR" id="A48940">
    <property type="entry name" value="A48940"/>
</dbReference>
<dbReference type="PDB" id="1EPW">
    <property type="method" value="X-ray"/>
    <property type="resolution" value="1.90 A"/>
    <property type="chains" value="A=2-1291"/>
</dbReference>
<dbReference type="PDB" id="1F31">
    <property type="method" value="X-ray"/>
    <property type="resolution" value="2.60 A"/>
    <property type="chains" value="A=2-1291"/>
</dbReference>
<dbReference type="PDB" id="1F82">
    <property type="method" value="X-ray"/>
    <property type="resolution" value="2.20 A"/>
    <property type="chains" value="A=2-425"/>
</dbReference>
<dbReference type="PDB" id="1G9A">
    <property type="method" value="X-ray"/>
    <property type="resolution" value="2.10 A"/>
    <property type="chains" value="A=2-1291"/>
</dbReference>
<dbReference type="PDB" id="1G9B">
    <property type="method" value="X-ray"/>
    <property type="resolution" value="2.00 A"/>
    <property type="chains" value="A=2-1291"/>
</dbReference>
<dbReference type="PDB" id="1G9C">
    <property type="method" value="X-ray"/>
    <property type="resolution" value="2.35 A"/>
    <property type="chains" value="A=2-1291"/>
</dbReference>
<dbReference type="PDB" id="1G9D">
    <property type="method" value="X-ray"/>
    <property type="resolution" value="2.20 A"/>
    <property type="chains" value="A=2-1291"/>
</dbReference>
<dbReference type="PDB" id="1I1E">
    <property type="method" value="X-ray"/>
    <property type="resolution" value="2.50 A"/>
    <property type="chains" value="A=2-1291"/>
</dbReference>
<dbReference type="PDB" id="1S0B">
    <property type="method" value="X-ray"/>
    <property type="resolution" value="2.00 A"/>
    <property type="chains" value="A=2-1291"/>
</dbReference>
<dbReference type="PDB" id="1S0C">
    <property type="method" value="X-ray"/>
    <property type="resolution" value="2.20 A"/>
    <property type="chains" value="A=2-1291"/>
</dbReference>
<dbReference type="PDB" id="1S0D">
    <property type="method" value="X-ray"/>
    <property type="resolution" value="2.20 A"/>
    <property type="chains" value="A=2-1291"/>
</dbReference>
<dbReference type="PDB" id="1S0E">
    <property type="method" value="X-ray"/>
    <property type="resolution" value="1.90 A"/>
    <property type="chains" value="A=2-1291"/>
</dbReference>
<dbReference type="PDB" id="1S0F">
    <property type="method" value="X-ray"/>
    <property type="resolution" value="2.30 A"/>
    <property type="chains" value="A=2-1291"/>
</dbReference>
<dbReference type="PDB" id="1S0G">
    <property type="method" value="X-ray"/>
    <property type="resolution" value="2.60 A"/>
    <property type="chains" value="A=2-1291"/>
</dbReference>
<dbReference type="PDB" id="1Z0H">
    <property type="method" value="X-ray"/>
    <property type="resolution" value="2.00 A"/>
    <property type="chains" value="A/B=854-1291"/>
</dbReference>
<dbReference type="PDB" id="2ETF">
    <property type="method" value="X-ray"/>
    <property type="resolution" value="2.29 A"/>
    <property type="chains" value="A/B=1-441"/>
</dbReference>
<dbReference type="PDB" id="2NM1">
    <property type="method" value="X-ray"/>
    <property type="resolution" value="2.15 A"/>
    <property type="chains" value="A=858-1291"/>
</dbReference>
<dbReference type="PDB" id="2NP0">
    <property type="method" value="X-ray"/>
    <property type="resolution" value="2.62 A"/>
    <property type="chains" value="A=2-1291"/>
</dbReference>
<dbReference type="PDB" id="2XHL">
    <property type="method" value="X-ray"/>
    <property type="resolution" value="2.80 A"/>
    <property type="chains" value="A=1-437, B=446-858"/>
</dbReference>
<dbReference type="PDB" id="3ZUQ">
    <property type="method" value="X-ray"/>
    <property type="resolution" value="2.70 A"/>
    <property type="chains" value="A=1-437, A=446-858"/>
</dbReference>
<dbReference type="PDB" id="4KBB">
    <property type="method" value="X-ray"/>
    <property type="resolution" value="2.30 A"/>
    <property type="chains" value="A/B=857-1291"/>
</dbReference>
<dbReference type="PDB" id="5VID">
    <property type="method" value="X-ray"/>
    <property type="resolution" value="2.75 A"/>
    <property type="chains" value="A/B/C/D/E=859-1291"/>
</dbReference>
<dbReference type="PDB" id="5VMR">
    <property type="method" value="X-ray"/>
    <property type="resolution" value="1.95 A"/>
    <property type="chains" value="A/B=859-1291"/>
</dbReference>
<dbReference type="PDB" id="6G5F">
    <property type="method" value="X-ray"/>
    <property type="resolution" value="2.50 A"/>
    <property type="chains" value="A/B=1-1291"/>
</dbReference>
<dbReference type="PDB" id="6G5G">
    <property type="method" value="X-ray"/>
    <property type="resolution" value="2.00 A"/>
    <property type="chains" value="A/B=1-1291"/>
</dbReference>
<dbReference type="PDB" id="6G5K">
    <property type="method" value="X-ray"/>
    <property type="resolution" value="2.00 A"/>
    <property type="chains" value="A/B=857-1291"/>
</dbReference>
<dbReference type="PDB" id="6QNS">
    <property type="method" value="X-ray"/>
    <property type="resolution" value="2.40 A"/>
    <property type="chains" value="A=857-1291"/>
</dbReference>
<dbReference type="PDB" id="6UC6">
    <property type="method" value="X-ray"/>
    <property type="resolution" value="2.32 A"/>
    <property type="chains" value="A/B=859-1291"/>
</dbReference>
<dbReference type="PDB" id="6UFT">
    <property type="method" value="X-ray"/>
    <property type="resolution" value="2.90 A"/>
    <property type="chains" value="A=859-1291"/>
</dbReference>
<dbReference type="PDB" id="6UHT">
    <property type="method" value="X-ray"/>
    <property type="resolution" value="2.20 A"/>
    <property type="chains" value="A/B=859-1291"/>
</dbReference>
<dbReference type="PDB" id="6UL4">
    <property type="method" value="X-ray"/>
    <property type="resolution" value="3.18 A"/>
    <property type="chains" value="A=859-1291"/>
</dbReference>
<dbReference type="PDB" id="7NA9">
    <property type="method" value="X-ray"/>
    <property type="resolution" value="1.76 A"/>
    <property type="chains" value="A=1-441"/>
</dbReference>
<dbReference type="PDB" id="7QFQ">
    <property type="method" value="EM"/>
    <property type="resolution" value="3.60 A"/>
    <property type="chains" value="A=1-1291"/>
</dbReference>
<dbReference type="PDB" id="7T5F">
    <property type="method" value="X-ray"/>
    <property type="resolution" value="2.60 A"/>
    <property type="chains" value="A/D=1-425"/>
</dbReference>
<dbReference type="PDBsum" id="1EPW"/>
<dbReference type="PDBsum" id="1F31"/>
<dbReference type="PDBsum" id="1F82"/>
<dbReference type="PDBsum" id="1G9A"/>
<dbReference type="PDBsum" id="1G9B"/>
<dbReference type="PDBsum" id="1G9C"/>
<dbReference type="PDBsum" id="1G9D"/>
<dbReference type="PDBsum" id="1I1E"/>
<dbReference type="PDBsum" id="1S0B"/>
<dbReference type="PDBsum" id="1S0C"/>
<dbReference type="PDBsum" id="1S0D"/>
<dbReference type="PDBsum" id="1S0E"/>
<dbReference type="PDBsum" id="1S0F"/>
<dbReference type="PDBsum" id="1S0G"/>
<dbReference type="PDBsum" id="1Z0H"/>
<dbReference type="PDBsum" id="2ETF"/>
<dbReference type="PDBsum" id="2NM1"/>
<dbReference type="PDBsum" id="2NP0"/>
<dbReference type="PDBsum" id="2XHL"/>
<dbReference type="PDBsum" id="3ZUQ"/>
<dbReference type="PDBsum" id="4KBB"/>
<dbReference type="PDBsum" id="5VID"/>
<dbReference type="PDBsum" id="5VMR"/>
<dbReference type="PDBsum" id="6G5F"/>
<dbReference type="PDBsum" id="6G5G"/>
<dbReference type="PDBsum" id="6G5K"/>
<dbReference type="PDBsum" id="6QNS"/>
<dbReference type="PDBsum" id="6UC6"/>
<dbReference type="PDBsum" id="6UFT"/>
<dbReference type="PDBsum" id="6UHT"/>
<dbReference type="PDBsum" id="6UL4"/>
<dbReference type="PDBsum" id="7NA9"/>
<dbReference type="PDBsum" id="7QFQ"/>
<dbReference type="PDBsum" id="7T5F"/>
<dbReference type="EMDB" id="EMD-13947"/>
<dbReference type="SMR" id="P10844"/>
<dbReference type="DIP" id="DIP-42782N"/>
<dbReference type="IntAct" id="P10844">
    <property type="interactions" value="4"/>
</dbReference>
<dbReference type="MINT" id="P10844"/>
<dbReference type="BindingDB" id="P10844"/>
<dbReference type="ChEMBL" id="CHEMBL1075064"/>
<dbReference type="DrugBank" id="DB02379">
    <property type="generic name" value="Beta-D-Glucose"/>
</dbReference>
<dbReference type="DrugBank" id="DB01705">
    <property type="generic name" value="Bis(5-Amidino-Benzimidazolyl)Methane"/>
</dbReference>
<dbReference type="DrugBank" id="DB13903">
    <property type="generic name" value="Equine Botulinum Neurotoxin B Immune FAB2"/>
</dbReference>
<dbReference type="DrugBank" id="DB03721">
    <property type="generic name" value="N-acetyl-alpha-neuraminic acid"/>
</dbReference>
<dbReference type="MEROPS" id="M27.002"/>
<dbReference type="UniLectin" id="P10844"/>
<dbReference type="ABCD" id="P10844">
    <property type="antibodies" value="27 sequenced antibodies"/>
</dbReference>
<dbReference type="BRENDA" id="3.4.24.69">
    <property type="organism ID" value="1462"/>
</dbReference>
<dbReference type="Reactome" id="R-HSA-5250958">
    <property type="pathway name" value="Toxicity of botulinum toxin type B (botB)"/>
</dbReference>
<dbReference type="SABIO-RK" id="P10844"/>
<dbReference type="EvolutionaryTrace" id="P10844"/>
<dbReference type="GO" id="GO:0005576">
    <property type="term" value="C:extracellular region"/>
    <property type="evidence" value="ECO:0007669"/>
    <property type="project" value="UniProtKB-SubCell"/>
</dbReference>
<dbReference type="GO" id="GO:0044161">
    <property type="term" value="C:host cell cytoplasmic vesicle"/>
    <property type="evidence" value="ECO:0007669"/>
    <property type="project" value="UniProtKB-SubCell"/>
</dbReference>
<dbReference type="GO" id="GO:0044164">
    <property type="term" value="C:host cell cytosol"/>
    <property type="evidence" value="ECO:0007669"/>
    <property type="project" value="UniProtKB-SubCell"/>
</dbReference>
<dbReference type="GO" id="GO:0020002">
    <property type="term" value="C:host cell plasma membrane"/>
    <property type="evidence" value="ECO:0007669"/>
    <property type="project" value="UniProtKB-KW"/>
</dbReference>
<dbReference type="GO" id="GO:0044231">
    <property type="term" value="C:host cell presynaptic membrane"/>
    <property type="evidence" value="ECO:0007669"/>
    <property type="project" value="UniProtKB-SubCell"/>
</dbReference>
<dbReference type="GO" id="GO:0016020">
    <property type="term" value="C:membrane"/>
    <property type="evidence" value="ECO:0007669"/>
    <property type="project" value="UniProtKB-KW"/>
</dbReference>
<dbReference type="GO" id="GO:0008289">
    <property type="term" value="F:lipid binding"/>
    <property type="evidence" value="ECO:0007669"/>
    <property type="project" value="UniProtKB-KW"/>
</dbReference>
<dbReference type="GO" id="GO:0004222">
    <property type="term" value="F:metalloendopeptidase activity"/>
    <property type="evidence" value="ECO:0007669"/>
    <property type="project" value="UniProtKB-EC"/>
</dbReference>
<dbReference type="GO" id="GO:0008320">
    <property type="term" value="F:protein transmembrane transporter activity"/>
    <property type="evidence" value="ECO:0000269"/>
    <property type="project" value="Reactome"/>
</dbReference>
<dbReference type="GO" id="GO:0090729">
    <property type="term" value="F:toxin activity"/>
    <property type="evidence" value="ECO:0007669"/>
    <property type="project" value="UniProtKB-KW"/>
</dbReference>
<dbReference type="GO" id="GO:0008270">
    <property type="term" value="F:zinc ion binding"/>
    <property type="evidence" value="ECO:0000314"/>
    <property type="project" value="UniProtKB"/>
</dbReference>
<dbReference type="GO" id="GO:0006508">
    <property type="term" value="P:proteolysis"/>
    <property type="evidence" value="ECO:0007669"/>
    <property type="project" value="UniProtKB-KW"/>
</dbReference>
<dbReference type="CDD" id="cd23389">
    <property type="entry name" value="Toxin_R_bind_C_BoNTB"/>
    <property type="match status" value="1"/>
</dbReference>
<dbReference type="FunFam" id="2.60.120.200:FF:000184">
    <property type="entry name" value="Botulinum neurotoxin type A"/>
    <property type="match status" value="1"/>
</dbReference>
<dbReference type="FunFam" id="3.90.1240.10:FF:000001">
    <property type="entry name" value="Botulinum neurotoxin type B"/>
    <property type="match status" value="1"/>
</dbReference>
<dbReference type="Gene3D" id="2.60.120.200">
    <property type="match status" value="1"/>
</dbReference>
<dbReference type="Gene3D" id="2.80.10.50">
    <property type="match status" value="1"/>
</dbReference>
<dbReference type="Gene3D" id="1.20.1120.10">
    <property type="entry name" value="Clostridium botulinum neurotoxin b, 'coiled-coil' domain"/>
    <property type="match status" value="1"/>
</dbReference>
<dbReference type="Gene3D" id="3.90.1240.10">
    <property type="entry name" value="Metalloproteases ('zincins'), catalytic domain like"/>
    <property type="match status" value="1"/>
</dbReference>
<dbReference type="InterPro" id="IPR000395">
    <property type="entry name" value="Bot/tetX_LC"/>
</dbReference>
<dbReference type="InterPro" id="IPR036248">
    <property type="entry name" value="Clostridium_toxin_transloc"/>
</dbReference>
<dbReference type="InterPro" id="IPR013320">
    <property type="entry name" value="ConA-like_dom_sf"/>
</dbReference>
<dbReference type="InterPro" id="IPR011065">
    <property type="entry name" value="Kunitz_inhibitor_STI-like_sf"/>
</dbReference>
<dbReference type="InterPro" id="IPR013104">
    <property type="entry name" value="Toxin_rcpt-bd_C"/>
</dbReference>
<dbReference type="InterPro" id="IPR012928">
    <property type="entry name" value="Toxin_rcpt-bd_N"/>
</dbReference>
<dbReference type="InterPro" id="IPR012500">
    <property type="entry name" value="Toxin_trans"/>
</dbReference>
<dbReference type="Pfam" id="PF01742">
    <property type="entry name" value="Peptidase_M27"/>
    <property type="match status" value="1"/>
</dbReference>
<dbReference type="Pfam" id="PF07951">
    <property type="entry name" value="Toxin_R_bind_C"/>
    <property type="match status" value="1"/>
</dbReference>
<dbReference type="Pfam" id="PF07953">
    <property type="entry name" value="Toxin_R_bind_N"/>
    <property type="match status" value="1"/>
</dbReference>
<dbReference type="Pfam" id="PF07952">
    <property type="entry name" value="Toxin_trans"/>
    <property type="match status" value="1"/>
</dbReference>
<dbReference type="PRINTS" id="PR00760">
    <property type="entry name" value="BONTOXILYSIN"/>
</dbReference>
<dbReference type="SUPFAM" id="SSF58091">
    <property type="entry name" value="Clostridium neurotoxins, 'coiled-coil' domain"/>
    <property type="match status" value="1"/>
</dbReference>
<dbReference type="SUPFAM" id="SSF49899">
    <property type="entry name" value="Concanavalin A-like lectins/glucanases"/>
    <property type="match status" value="1"/>
</dbReference>
<dbReference type="SUPFAM" id="SSF55486">
    <property type="entry name" value="Metalloproteases ('zincins'), catalytic domain"/>
    <property type="match status" value="1"/>
</dbReference>
<dbReference type="SUPFAM" id="SSF50386">
    <property type="entry name" value="STI-like"/>
    <property type="match status" value="1"/>
</dbReference>
<dbReference type="PROSITE" id="PS00142">
    <property type="entry name" value="ZINC_PROTEASE"/>
    <property type="match status" value="1"/>
</dbReference>
<keyword id="KW-0002">3D-structure</keyword>
<keyword id="KW-0903">Direct protein sequencing</keyword>
<keyword id="KW-1015">Disulfide bond</keyword>
<keyword id="KW-1032">Host cell membrane</keyword>
<keyword id="KW-1035">Host cytoplasm</keyword>
<keyword id="KW-1036">Host cytoplasmic vesicle</keyword>
<keyword id="KW-1043">Host membrane</keyword>
<keyword id="KW-1051">Host synapse</keyword>
<keyword id="KW-0378">Hydrolase</keyword>
<keyword id="KW-0446">Lipid-binding</keyword>
<keyword id="KW-0472">Membrane</keyword>
<keyword id="KW-0479">Metal-binding</keyword>
<keyword id="KW-0482">Metalloprotease</keyword>
<keyword id="KW-0528">Neurotoxin</keyword>
<keyword id="KW-0582">Pharmaceutical</keyword>
<keyword id="KW-0645">Protease</keyword>
<keyword id="KW-0964">Secreted</keyword>
<keyword id="KW-0800">Toxin</keyword>
<keyword id="KW-0812">Transmembrane</keyword>
<keyword id="KW-0843">Virulence</keyword>
<keyword id="KW-0862">Zinc</keyword>
<protein>
    <recommendedName>
        <fullName>Botulinum neurotoxin type B</fullName>
        <shortName>BoNT/B</shortName>
    </recommendedName>
    <alternativeName>
        <fullName>Bontoxilysin-B</fullName>
    </alternativeName>
    <component>
        <recommendedName>
            <fullName>Botulinum neurotoxin B light chain</fullName>
            <shortName>LC</shortName>
            <ecNumber evidence="6">3.4.24.69</ecNumber>
        </recommendedName>
    </component>
    <component>
        <recommendedName>
            <fullName>Botulinum neurotoxin B heavy chain</fullName>
            <shortName>HC</shortName>
        </recommendedName>
    </component>
</protein>